<proteinExistence type="inferred from homology"/>
<dbReference type="EC" id="6.1.1.20" evidence="1"/>
<dbReference type="EMBL" id="CP000614">
    <property type="protein sequence ID" value="ABO54451.1"/>
    <property type="molecule type" value="Genomic_DNA"/>
</dbReference>
<dbReference type="SMR" id="A4JDU8"/>
<dbReference type="KEGG" id="bvi:Bcep1808_1443"/>
<dbReference type="eggNOG" id="COG0016">
    <property type="taxonomic scope" value="Bacteria"/>
</dbReference>
<dbReference type="HOGENOM" id="CLU_025086_0_1_4"/>
<dbReference type="Proteomes" id="UP000002287">
    <property type="component" value="Chromosome 1"/>
</dbReference>
<dbReference type="GO" id="GO:0005737">
    <property type="term" value="C:cytoplasm"/>
    <property type="evidence" value="ECO:0007669"/>
    <property type="project" value="UniProtKB-SubCell"/>
</dbReference>
<dbReference type="GO" id="GO:0005524">
    <property type="term" value="F:ATP binding"/>
    <property type="evidence" value="ECO:0007669"/>
    <property type="project" value="UniProtKB-UniRule"/>
</dbReference>
<dbReference type="GO" id="GO:0000287">
    <property type="term" value="F:magnesium ion binding"/>
    <property type="evidence" value="ECO:0007669"/>
    <property type="project" value="UniProtKB-UniRule"/>
</dbReference>
<dbReference type="GO" id="GO:0004826">
    <property type="term" value="F:phenylalanine-tRNA ligase activity"/>
    <property type="evidence" value="ECO:0007669"/>
    <property type="project" value="UniProtKB-UniRule"/>
</dbReference>
<dbReference type="GO" id="GO:0000049">
    <property type="term" value="F:tRNA binding"/>
    <property type="evidence" value="ECO:0007669"/>
    <property type="project" value="InterPro"/>
</dbReference>
<dbReference type="GO" id="GO:0006432">
    <property type="term" value="P:phenylalanyl-tRNA aminoacylation"/>
    <property type="evidence" value="ECO:0007669"/>
    <property type="project" value="UniProtKB-UniRule"/>
</dbReference>
<dbReference type="CDD" id="cd00496">
    <property type="entry name" value="PheRS_alpha_core"/>
    <property type="match status" value="1"/>
</dbReference>
<dbReference type="FunFam" id="3.30.930.10:FF:000003">
    <property type="entry name" value="Phenylalanine--tRNA ligase alpha subunit"/>
    <property type="match status" value="1"/>
</dbReference>
<dbReference type="Gene3D" id="3.30.930.10">
    <property type="entry name" value="Bira Bifunctional Protein, Domain 2"/>
    <property type="match status" value="1"/>
</dbReference>
<dbReference type="HAMAP" id="MF_00281">
    <property type="entry name" value="Phe_tRNA_synth_alpha1"/>
    <property type="match status" value="1"/>
</dbReference>
<dbReference type="InterPro" id="IPR006195">
    <property type="entry name" value="aa-tRNA-synth_II"/>
</dbReference>
<dbReference type="InterPro" id="IPR045864">
    <property type="entry name" value="aa-tRNA-synth_II/BPL/LPL"/>
</dbReference>
<dbReference type="InterPro" id="IPR004529">
    <property type="entry name" value="Phe-tRNA-synth_IIc_asu"/>
</dbReference>
<dbReference type="InterPro" id="IPR004188">
    <property type="entry name" value="Phe-tRNA_ligase_II_N"/>
</dbReference>
<dbReference type="InterPro" id="IPR022911">
    <property type="entry name" value="Phe_tRNA_ligase_alpha1_bac"/>
</dbReference>
<dbReference type="InterPro" id="IPR002319">
    <property type="entry name" value="Phenylalanyl-tRNA_Synthase"/>
</dbReference>
<dbReference type="InterPro" id="IPR010978">
    <property type="entry name" value="tRNA-bd_arm"/>
</dbReference>
<dbReference type="NCBIfam" id="TIGR00468">
    <property type="entry name" value="pheS"/>
    <property type="match status" value="1"/>
</dbReference>
<dbReference type="PANTHER" id="PTHR11538:SF41">
    <property type="entry name" value="PHENYLALANINE--TRNA LIGASE, MITOCHONDRIAL"/>
    <property type="match status" value="1"/>
</dbReference>
<dbReference type="PANTHER" id="PTHR11538">
    <property type="entry name" value="PHENYLALANYL-TRNA SYNTHETASE"/>
    <property type="match status" value="1"/>
</dbReference>
<dbReference type="Pfam" id="PF02912">
    <property type="entry name" value="Phe_tRNA-synt_N"/>
    <property type="match status" value="1"/>
</dbReference>
<dbReference type="Pfam" id="PF01409">
    <property type="entry name" value="tRNA-synt_2d"/>
    <property type="match status" value="1"/>
</dbReference>
<dbReference type="SUPFAM" id="SSF55681">
    <property type="entry name" value="Class II aaRS and biotin synthetases"/>
    <property type="match status" value="1"/>
</dbReference>
<dbReference type="SUPFAM" id="SSF46589">
    <property type="entry name" value="tRNA-binding arm"/>
    <property type="match status" value="1"/>
</dbReference>
<dbReference type="PROSITE" id="PS50862">
    <property type="entry name" value="AA_TRNA_LIGASE_II"/>
    <property type="match status" value="1"/>
</dbReference>
<accession>A4JDU8</accession>
<protein>
    <recommendedName>
        <fullName evidence="1">Phenylalanine--tRNA ligase alpha subunit</fullName>
        <ecNumber evidence="1">6.1.1.20</ecNumber>
    </recommendedName>
    <alternativeName>
        <fullName evidence="1">Phenylalanyl-tRNA synthetase alpha subunit</fullName>
        <shortName evidence="1">PheRS</shortName>
    </alternativeName>
</protein>
<name>SYFA_BURVG</name>
<organism>
    <name type="scientific">Burkholderia vietnamiensis (strain G4 / LMG 22486)</name>
    <name type="common">Burkholderia cepacia (strain R1808)</name>
    <dbReference type="NCBI Taxonomy" id="269482"/>
    <lineage>
        <taxon>Bacteria</taxon>
        <taxon>Pseudomonadati</taxon>
        <taxon>Pseudomonadota</taxon>
        <taxon>Betaproteobacteria</taxon>
        <taxon>Burkholderiales</taxon>
        <taxon>Burkholderiaceae</taxon>
        <taxon>Burkholderia</taxon>
        <taxon>Burkholderia cepacia complex</taxon>
    </lineage>
</organism>
<gene>
    <name evidence="1" type="primary">pheS</name>
    <name type="ordered locus">Bcep1808_1443</name>
</gene>
<sequence length="337" mass="38127">MDLDQIVADAQQSFEQAADITTLENEKARFLGKSGALTELLKGLGKLDPEARKTEGARINVAKQQVEAALTARRQALADALLNQRLAAEAIDVTLPGRGAGAGSLHPVMRTWERVEQIFRSIGFDVADGPEIETDWYNFTSLNSPENHPARSMQDTFYVEGKDADGRQLLLRTHTSPMQVRYARMNRPPIKVIAPGRTYRVDSDATHSPMFNQVEGLWIDENISFADLKGVYTDFLKKFFERDDILVRFRPSYFPFTEPSAEIDMMFEHGKNAGKWLEISGSGQVHPTVIRNMGLDPERYIGFAFGSGLERLTMLRYGVQDLRLFFENDLRFLRQFA</sequence>
<evidence type="ECO:0000255" key="1">
    <source>
        <dbReference type="HAMAP-Rule" id="MF_00281"/>
    </source>
</evidence>
<reference key="1">
    <citation type="submission" date="2007-03" db="EMBL/GenBank/DDBJ databases">
        <title>Complete sequence of chromosome 1 of Burkholderia vietnamiensis G4.</title>
        <authorList>
            <consortium name="US DOE Joint Genome Institute"/>
            <person name="Copeland A."/>
            <person name="Lucas S."/>
            <person name="Lapidus A."/>
            <person name="Barry K."/>
            <person name="Detter J.C."/>
            <person name="Glavina del Rio T."/>
            <person name="Hammon N."/>
            <person name="Israni S."/>
            <person name="Dalin E."/>
            <person name="Tice H."/>
            <person name="Pitluck S."/>
            <person name="Chain P."/>
            <person name="Malfatti S."/>
            <person name="Shin M."/>
            <person name="Vergez L."/>
            <person name="Schmutz J."/>
            <person name="Larimer F."/>
            <person name="Land M."/>
            <person name="Hauser L."/>
            <person name="Kyrpides N."/>
            <person name="Tiedje J."/>
            <person name="Richardson P."/>
        </authorList>
    </citation>
    <scope>NUCLEOTIDE SEQUENCE [LARGE SCALE GENOMIC DNA]</scope>
    <source>
        <strain>G4 / LMG 22486</strain>
    </source>
</reference>
<keyword id="KW-0030">Aminoacyl-tRNA synthetase</keyword>
<keyword id="KW-0067">ATP-binding</keyword>
<keyword id="KW-0963">Cytoplasm</keyword>
<keyword id="KW-0436">Ligase</keyword>
<keyword id="KW-0460">Magnesium</keyword>
<keyword id="KW-0479">Metal-binding</keyword>
<keyword id="KW-0547">Nucleotide-binding</keyword>
<keyword id="KW-0648">Protein biosynthesis</keyword>
<comment type="catalytic activity">
    <reaction evidence="1">
        <text>tRNA(Phe) + L-phenylalanine + ATP = L-phenylalanyl-tRNA(Phe) + AMP + diphosphate + H(+)</text>
        <dbReference type="Rhea" id="RHEA:19413"/>
        <dbReference type="Rhea" id="RHEA-COMP:9668"/>
        <dbReference type="Rhea" id="RHEA-COMP:9699"/>
        <dbReference type="ChEBI" id="CHEBI:15378"/>
        <dbReference type="ChEBI" id="CHEBI:30616"/>
        <dbReference type="ChEBI" id="CHEBI:33019"/>
        <dbReference type="ChEBI" id="CHEBI:58095"/>
        <dbReference type="ChEBI" id="CHEBI:78442"/>
        <dbReference type="ChEBI" id="CHEBI:78531"/>
        <dbReference type="ChEBI" id="CHEBI:456215"/>
        <dbReference type="EC" id="6.1.1.20"/>
    </reaction>
</comment>
<comment type="cofactor">
    <cofactor evidence="1">
        <name>Mg(2+)</name>
        <dbReference type="ChEBI" id="CHEBI:18420"/>
    </cofactor>
    <text evidence="1">Binds 2 magnesium ions per tetramer.</text>
</comment>
<comment type="subunit">
    <text evidence="1">Tetramer of two alpha and two beta subunits.</text>
</comment>
<comment type="subcellular location">
    <subcellularLocation>
        <location evidence="1">Cytoplasm</location>
    </subcellularLocation>
</comment>
<comment type="similarity">
    <text evidence="1">Belongs to the class-II aminoacyl-tRNA synthetase family. Phe-tRNA synthetase alpha subunit type 1 subfamily.</text>
</comment>
<feature type="chain" id="PRO_1000059236" description="Phenylalanine--tRNA ligase alpha subunit">
    <location>
        <begin position="1"/>
        <end position="337"/>
    </location>
</feature>
<feature type="binding site" evidence="1">
    <location>
        <position position="258"/>
    </location>
    <ligand>
        <name>Mg(2+)</name>
        <dbReference type="ChEBI" id="CHEBI:18420"/>
        <note>shared with beta subunit</note>
    </ligand>
</feature>